<dbReference type="EC" id="1.8.1.2" evidence="1"/>
<dbReference type="EMBL" id="CP000946">
    <property type="protein sequence ID" value="ACA76618.1"/>
    <property type="molecule type" value="Genomic_DNA"/>
</dbReference>
<dbReference type="RefSeq" id="WP_001290712.1">
    <property type="nucleotide sequence ID" value="NC_010468.1"/>
</dbReference>
<dbReference type="SMR" id="B1IU78"/>
<dbReference type="KEGG" id="ecl:EcolC_0949"/>
<dbReference type="HOGENOM" id="CLU_001975_3_2_6"/>
<dbReference type="UniPathway" id="UPA00140">
    <property type="reaction ID" value="UER00207"/>
</dbReference>
<dbReference type="GO" id="GO:0009337">
    <property type="term" value="C:sulfite reductase complex (NADPH)"/>
    <property type="evidence" value="ECO:0007669"/>
    <property type="project" value="InterPro"/>
</dbReference>
<dbReference type="GO" id="GO:0051539">
    <property type="term" value="F:4 iron, 4 sulfur cluster binding"/>
    <property type="evidence" value="ECO:0007669"/>
    <property type="project" value="UniProtKB-KW"/>
</dbReference>
<dbReference type="GO" id="GO:0020037">
    <property type="term" value="F:heme binding"/>
    <property type="evidence" value="ECO:0007669"/>
    <property type="project" value="InterPro"/>
</dbReference>
<dbReference type="GO" id="GO:0046872">
    <property type="term" value="F:metal ion binding"/>
    <property type="evidence" value="ECO:0007669"/>
    <property type="project" value="UniProtKB-KW"/>
</dbReference>
<dbReference type="GO" id="GO:0050661">
    <property type="term" value="F:NADP binding"/>
    <property type="evidence" value="ECO:0007669"/>
    <property type="project" value="InterPro"/>
</dbReference>
<dbReference type="GO" id="GO:0050311">
    <property type="term" value="F:sulfite reductase (ferredoxin) activity"/>
    <property type="evidence" value="ECO:0007669"/>
    <property type="project" value="TreeGrafter"/>
</dbReference>
<dbReference type="GO" id="GO:0004783">
    <property type="term" value="F:sulfite reductase (NADPH) activity"/>
    <property type="evidence" value="ECO:0007669"/>
    <property type="project" value="UniProtKB-UniRule"/>
</dbReference>
<dbReference type="GO" id="GO:0019344">
    <property type="term" value="P:cysteine biosynthetic process"/>
    <property type="evidence" value="ECO:0007669"/>
    <property type="project" value="UniProtKB-KW"/>
</dbReference>
<dbReference type="GO" id="GO:0070814">
    <property type="term" value="P:hydrogen sulfide biosynthetic process"/>
    <property type="evidence" value="ECO:0007669"/>
    <property type="project" value="UniProtKB-UniRule"/>
</dbReference>
<dbReference type="GO" id="GO:0000103">
    <property type="term" value="P:sulfate assimilation"/>
    <property type="evidence" value="ECO:0007669"/>
    <property type="project" value="UniProtKB-UniRule"/>
</dbReference>
<dbReference type="FunFam" id="3.30.413.10:FF:000003">
    <property type="entry name" value="Sulfite reductase [NADPH] hemoprotein beta-component"/>
    <property type="match status" value="1"/>
</dbReference>
<dbReference type="FunFam" id="3.30.413.10:FF:000004">
    <property type="entry name" value="Sulfite reductase [NADPH] hemoprotein beta-component"/>
    <property type="match status" value="1"/>
</dbReference>
<dbReference type="Gene3D" id="3.30.413.10">
    <property type="entry name" value="Sulfite Reductase Hemoprotein, domain 1"/>
    <property type="match status" value="2"/>
</dbReference>
<dbReference type="HAMAP" id="MF_01540">
    <property type="entry name" value="CysI"/>
    <property type="match status" value="1"/>
</dbReference>
<dbReference type="InterPro" id="IPR011786">
    <property type="entry name" value="CysI"/>
</dbReference>
<dbReference type="InterPro" id="IPR005117">
    <property type="entry name" value="NiRdtase/SiRdtase_haem-b_fer"/>
</dbReference>
<dbReference type="InterPro" id="IPR036136">
    <property type="entry name" value="Nit/Sulf_reduc_fer-like_dom_sf"/>
</dbReference>
<dbReference type="InterPro" id="IPR006067">
    <property type="entry name" value="NO2/SO3_Rdtase_4Fe4S_dom"/>
</dbReference>
<dbReference type="InterPro" id="IPR045169">
    <property type="entry name" value="NO2/SO3_Rdtase_4Fe4S_prot"/>
</dbReference>
<dbReference type="InterPro" id="IPR045854">
    <property type="entry name" value="NO2/SO3_Rdtase_4Fe4S_sf"/>
</dbReference>
<dbReference type="InterPro" id="IPR006066">
    <property type="entry name" value="NO2/SO3_Rdtase_FeS/sirohaem_BS"/>
</dbReference>
<dbReference type="NCBIfam" id="TIGR02041">
    <property type="entry name" value="CysI"/>
    <property type="match status" value="1"/>
</dbReference>
<dbReference type="NCBIfam" id="NF010029">
    <property type="entry name" value="PRK13504.1"/>
    <property type="match status" value="1"/>
</dbReference>
<dbReference type="PANTHER" id="PTHR11493:SF47">
    <property type="entry name" value="SULFITE REDUCTASE [NADPH] SUBUNIT BETA"/>
    <property type="match status" value="1"/>
</dbReference>
<dbReference type="PANTHER" id="PTHR11493">
    <property type="entry name" value="SULFITE REDUCTASE [NADPH] SUBUNIT BETA-RELATED"/>
    <property type="match status" value="1"/>
</dbReference>
<dbReference type="Pfam" id="PF01077">
    <property type="entry name" value="NIR_SIR"/>
    <property type="match status" value="1"/>
</dbReference>
<dbReference type="Pfam" id="PF03460">
    <property type="entry name" value="NIR_SIR_ferr"/>
    <property type="match status" value="2"/>
</dbReference>
<dbReference type="PRINTS" id="PR00397">
    <property type="entry name" value="SIROHAEM"/>
</dbReference>
<dbReference type="SUPFAM" id="SSF56014">
    <property type="entry name" value="Nitrite and sulphite reductase 4Fe-4S domain-like"/>
    <property type="match status" value="2"/>
</dbReference>
<dbReference type="SUPFAM" id="SSF55124">
    <property type="entry name" value="Nitrite/Sulfite reductase N-terminal domain-like"/>
    <property type="match status" value="2"/>
</dbReference>
<dbReference type="PROSITE" id="PS00365">
    <property type="entry name" value="NIR_SIR"/>
    <property type="match status" value="1"/>
</dbReference>
<feature type="chain" id="PRO_1000087626" description="Sulfite reductase [NADPH] hemoprotein beta-component">
    <location>
        <begin position="1"/>
        <end position="570"/>
    </location>
</feature>
<feature type="binding site" evidence="1">
    <location>
        <position position="434"/>
    </location>
    <ligand>
        <name>[4Fe-4S] cluster</name>
        <dbReference type="ChEBI" id="CHEBI:49883"/>
    </ligand>
</feature>
<feature type="binding site" evidence="1">
    <location>
        <position position="440"/>
    </location>
    <ligand>
        <name>[4Fe-4S] cluster</name>
        <dbReference type="ChEBI" id="CHEBI:49883"/>
    </ligand>
</feature>
<feature type="binding site" evidence="1">
    <location>
        <position position="479"/>
    </location>
    <ligand>
        <name>[4Fe-4S] cluster</name>
        <dbReference type="ChEBI" id="CHEBI:49883"/>
    </ligand>
</feature>
<feature type="binding site" evidence="1">
    <location>
        <position position="483"/>
    </location>
    <ligand>
        <name>[4Fe-4S] cluster</name>
        <dbReference type="ChEBI" id="CHEBI:49883"/>
    </ligand>
</feature>
<feature type="binding site" description="axial binding residue" evidence="1">
    <location>
        <position position="483"/>
    </location>
    <ligand>
        <name>siroheme</name>
        <dbReference type="ChEBI" id="CHEBI:60052"/>
    </ligand>
    <ligandPart>
        <name>Fe</name>
        <dbReference type="ChEBI" id="CHEBI:18248"/>
    </ligandPart>
</feature>
<organism>
    <name type="scientific">Escherichia coli (strain ATCC 8739 / DSM 1576 / NBRC 3972 / NCIMB 8545 / WDCM 00012 / Crooks)</name>
    <dbReference type="NCBI Taxonomy" id="481805"/>
    <lineage>
        <taxon>Bacteria</taxon>
        <taxon>Pseudomonadati</taxon>
        <taxon>Pseudomonadota</taxon>
        <taxon>Gammaproteobacteria</taxon>
        <taxon>Enterobacterales</taxon>
        <taxon>Enterobacteriaceae</taxon>
        <taxon>Escherichia</taxon>
    </lineage>
</organism>
<reference key="1">
    <citation type="submission" date="2008-02" db="EMBL/GenBank/DDBJ databases">
        <title>Complete sequence of Escherichia coli C str. ATCC 8739.</title>
        <authorList>
            <person name="Copeland A."/>
            <person name="Lucas S."/>
            <person name="Lapidus A."/>
            <person name="Glavina del Rio T."/>
            <person name="Dalin E."/>
            <person name="Tice H."/>
            <person name="Bruce D."/>
            <person name="Goodwin L."/>
            <person name="Pitluck S."/>
            <person name="Kiss H."/>
            <person name="Brettin T."/>
            <person name="Detter J.C."/>
            <person name="Han C."/>
            <person name="Kuske C.R."/>
            <person name="Schmutz J."/>
            <person name="Larimer F."/>
            <person name="Land M."/>
            <person name="Hauser L."/>
            <person name="Kyrpides N."/>
            <person name="Mikhailova N."/>
            <person name="Ingram L."/>
            <person name="Richardson P."/>
        </authorList>
    </citation>
    <scope>NUCLEOTIDE SEQUENCE [LARGE SCALE GENOMIC DNA]</scope>
    <source>
        <strain>ATCC 8739 / DSM 1576 / NBRC 3972 / NCIMB 8545 / WDCM 00012 / Crooks</strain>
    </source>
</reference>
<evidence type="ECO:0000255" key="1">
    <source>
        <dbReference type="HAMAP-Rule" id="MF_01540"/>
    </source>
</evidence>
<accession>B1IU78</accession>
<gene>
    <name evidence="1" type="primary">cysI</name>
    <name type="ordered locus">EcolC_0949</name>
</gene>
<keyword id="KW-0004">4Fe-4S</keyword>
<keyword id="KW-0028">Amino-acid biosynthesis</keyword>
<keyword id="KW-0198">Cysteine biosynthesis</keyword>
<keyword id="KW-0349">Heme</keyword>
<keyword id="KW-0408">Iron</keyword>
<keyword id="KW-0411">Iron-sulfur</keyword>
<keyword id="KW-0479">Metal-binding</keyword>
<keyword id="KW-0521">NADP</keyword>
<keyword id="KW-0560">Oxidoreductase</keyword>
<name>CYSI_ECOLC</name>
<proteinExistence type="inferred from homology"/>
<sequence length="570" mass="63990">MSEKHPGPLVVEGKLTDAERMKLESNYLRGTIAEDLNDGLTGGFKGDNFLLIRFHGMYQQDDRDIRAERAEQKLEPRHAMLLRCRLPGGVITTKQWQAIDKFAGENTIYGSIRLTNRQTFQFHGILKKNVKPVHQMLHSVGLDALATANDMNRNVLCTSNPYESQLHAEAYEWAKKISEHLLPRTRAYAEIWLDQEKVATTDEEPILGQTYLPRKFKTTVVIPPQNDIDLHANDMNFVAIAENGKLVGFNLLVGGGLSIEHGNKKTYARTASEFGYLPLEHTLAVAEAVVTTQRDWGNRTDRKNAKTKYTLERVGVETFKAEVERRAGIKFEPIRPYEFTGRGDRIGWVKGIDDNWHLTLFIENGRILDYPGRPLKTGLLEIAKIHKGDFRITANQNLIIAGVPESEKAKIEKIAKESGLMNAVTPQRENSMACVSFPTCPLAMAEAERFLPSFIDNIDNLMAKHGVSDEHIVMRVTGCPNGCGRAMLAEVGLVGKAPGRYNLHLSGNRIGTRIPRMYKENITEPEILASLDELIGRWAKEREAGEGFGDFTVRAGIIRPVLDPARDLWD</sequence>
<comment type="function">
    <text evidence="1">Component of the sulfite reductase complex that catalyzes the 6-electron reduction of sulfite to sulfide. This is one of several activities required for the biosynthesis of L-cysteine from sulfate.</text>
</comment>
<comment type="catalytic activity">
    <reaction evidence="1">
        <text>hydrogen sulfide + 3 NADP(+) + 3 H2O = sulfite + 3 NADPH + 4 H(+)</text>
        <dbReference type="Rhea" id="RHEA:13801"/>
        <dbReference type="ChEBI" id="CHEBI:15377"/>
        <dbReference type="ChEBI" id="CHEBI:15378"/>
        <dbReference type="ChEBI" id="CHEBI:17359"/>
        <dbReference type="ChEBI" id="CHEBI:29919"/>
        <dbReference type="ChEBI" id="CHEBI:57783"/>
        <dbReference type="ChEBI" id="CHEBI:58349"/>
        <dbReference type="EC" id="1.8.1.2"/>
    </reaction>
</comment>
<comment type="cofactor">
    <cofactor evidence="1">
        <name>siroheme</name>
        <dbReference type="ChEBI" id="CHEBI:60052"/>
    </cofactor>
    <text evidence="1">Binds 1 siroheme per subunit.</text>
</comment>
<comment type="cofactor">
    <cofactor evidence="1">
        <name>[4Fe-4S] cluster</name>
        <dbReference type="ChEBI" id="CHEBI:49883"/>
    </cofactor>
    <text evidence="1">Binds 1 [4Fe-4S] cluster per subunit.</text>
</comment>
<comment type="pathway">
    <text evidence="1">Sulfur metabolism; hydrogen sulfide biosynthesis; hydrogen sulfide from sulfite (NADPH route): step 1/1.</text>
</comment>
<comment type="subunit">
    <text evidence="1">Alpha(8)-beta(8). The alpha component is a flavoprotein, the beta component is a hemoprotein.</text>
</comment>
<comment type="similarity">
    <text evidence="1">Belongs to the nitrite and sulfite reductase 4Fe-4S domain family.</text>
</comment>
<protein>
    <recommendedName>
        <fullName evidence="1">Sulfite reductase [NADPH] hemoprotein beta-component</fullName>
        <shortName evidence="1">SiR-HP</shortName>
        <shortName evidence="1">SiRHP</shortName>
        <ecNumber evidence="1">1.8.1.2</ecNumber>
    </recommendedName>
</protein>